<accession>A1V5R9</accession>
<proteinExistence type="inferred from homology"/>
<reference key="1">
    <citation type="journal article" date="2010" name="Genome Biol. Evol.">
        <title>Continuing evolution of Burkholderia mallei through genome reduction and large-scale rearrangements.</title>
        <authorList>
            <person name="Losada L."/>
            <person name="Ronning C.M."/>
            <person name="DeShazer D."/>
            <person name="Woods D."/>
            <person name="Fedorova N."/>
            <person name="Kim H.S."/>
            <person name="Shabalina S.A."/>
            <person name="Pearson T.R."/>
            <person name="Brinkac L."/>
            <person name="Tan P."/>
            <person name="Nandi T."/>
            <person name="Crabtree J."/>
            <person name="Badger J."/>
            <person name="Beckstrom-Sternberg S."/>
            <person name="Saqib M."/>
            <person name="Schutzer S.E."/>
            <person name="Keim P."/>
            <person name="Nierman W.C."/>
        </authorList>
    </citation>
    <scope>NUCLEOTIDE SEQUENCE [LARGE SCALE GENOMIC DNA]</scope>
    <source>
        <strain>SAVP1</strain>
    </source>
</reference>
<organism>
    <name type="scientific">Burkholderia mallei (strain SAVP1)</name>
    <dbReference type="NCBI Taxonomy" id="320388"/>
    <lineage>
        <taxon>Bacteria</taxon>
        <taxon>Pseudomonadati</taxon>
        <taxon>Pseudomonadota</taxon>
        <taxon>Betaproteobacteria</taxon>
        <taxon>Burkholderiales</taxon>
        <taxon>Burkholderiaceae</taxon>
        <taxon>Burkholderia</taxon>
        <taxon>pseudomallei group</taxon>
    </lineage>
</organism>
<keyword id="KW-0408">Iron</keyword>
<name>FETP_BURMS</name>
<evidence type="ECO:0000255" key="1">
    <source>
        <dbReference type="HAMAP-Rule" id="MF_00686"/>
    </source>
</evidence>
<comment type="function">
    <text evidence="1">Could be a mediator in iron transactions between iron acquisition and iron-requiring processes, such as synthesis and/or repair of Fe-S clusters in biosynthetic enzymes.</text>
</comment>
<comment type="similarity">
    <text evidence="1">Belongs to the Fe(2+)-trafficking protein family.</text>
</comment>
<protein>
    <recommendedName>
        <fullName evidence="1">Probable Fe(2+)-trafficking protein</fullName>
    </recommendedName>
</protein>
<sequence length="91" mass="10376">MARMIHCAKLGKEAEGLDFPPLPGELGKRLYESVSKQAWQDWLKQQTMLINENRLNMADPRARQYLMKQTEKYFFGEGADQASGYVPPAQG</sequence>
<gene>
    <name type="ordered locus">BMASAVP1_A2261</name>
</gene>
<dbReference type="EMBL" id="CP000526">
    <property type="protein sequence ID" value="ABM51451.1"/>
    <property type="molecule type" value="Genomic_DNA"/>
</dbReference>
<dbReference type="RefSeq" id="WP_004193961.1">
    <property type="nucleotide sequence ID" value="NC_008785.1"/>
</dbReference>
<dbReference type="BMRB" id="A1V5R9"/>
<dbReference type="SMR" id="A1V5R9"/>
<dbReference type="KEGG" id="bmv:BMASAVP1_A2261"/>
<dbReference type="HOGENOM" id="CLU_170994_0_0_4"/>
<dbReference type="GO" id="GO:0005829">
    <property type="term" value="C:cytosol"/>
    <property type="evidence" value="ECO:0007669"/>
    <property type="project" value="TreeGrafter"/>
</dbReference>
<dbReference type="GO" id="GO:0005506">
    <property type="term" value="F:iron ion binding"/>
    <property type="evidence" value="ECO:0007669"/>
    <property type="project" value="UniProtKB-UniRule"/>
</dbReference>
<dbReference type="GO" id="GO:0034599">
    <property type="term" value="P:cellular response to oxidative stress"/>
    <property type="evidence" value="ECO:0007669"/>
    <property type="project" value="TreeGrafter"/>
</dbReference>
<dbReference type="FunFam" id="1.10.3880.10:FF:000001">
    <property type="entry name" value="Probable Fe(2+)-trafficking protein"/>
    <property type="match status" value="1"/>
</dbReference>
<dbReference type="Gene3D" id="1.10.3880.10">
    <property type="entry name" value="Fe(II) trafficking protein YggX"/>
    <property type="match status" value="1"/>
</dbReference>
<dbReference type="HAMAP" id="MF_00686">
    <property type="entry name" value="Fe_traffic_YggX"/>
    <property type="match status" value="1"/>
</dbReference>
<dbReference type="InterPro" id="IPR007457">
    <property type="entry name" value="Fe_traffick_prot_YggX"/>
</dbReference>
<dbReference type="InterPro" id="IPR036766">
    <property type="entry name" value="Fe_traffick_prot_YggX_sf"/>
</dbReference>
<dbReference type="NCBIfam" id="NF003817">
    <property type="entry name" value="PRK05408.1"/>
    <property type="match status" value="1"/>
</dbReference>
<dbReference type="PANTHER" id="PTHR36965">
    <property type="entry name" value="FE(2+)-TRAFFICKING PROTEIN-RELATED"/>
    <property type="match status" value="1"/>
</dbReference>
<dbReference type="PANTHER" id="PTHR36965:SF1">
    <property type="entry name" value="FE(2+)-TRAFFICKING PROTEIN-RELATED"/>
    <property type="match status" value="1"/>
</dbReference>
<dbReference type="Pfam" id="PF04362">
    <property type="entry name" value="Iron_traffic"/>
    <property type="match status" value="1"/>
</dbReference>
<dbReference type="PIRSF" id="PIRSF029827">
    <property type="entry name" value="Fe_traffic_YggX"/>
    <property type="match status" value="1"/>
</dbReference>
<dbReference type="SUPFAM" id="SSF111148">
    <property type="entry name" value="YggX-like"/>
    <property type="match status" value="1"/>
</dbReference>
<feature type="chain" id="PRO_1000045024" description="Probable Fe(2+)-trafficking protein">
    <location>
        <begin position="1"/>
        <end position="91"/>
    </location>
</feature>